<organism>
    <name type="scientific">Methanocaldococcus jannaschii (strain ATCC 43067 / DSM 2661 / JAL-1 / JCM 10045 / NBRC 100440)</name>
    <name type="common">Methanococcus jannaschii</name>
    <dbReference type="NCBI Taxonomy" id="243232"/>
    <lineage>
        <taxon>Archaea</taxon>
        <taxon>Methanobacteriati</taxon>
        <taxon>Methanobacteriota</taxon>
        <taxon>Methanomada group</taxon>
        <taxon>Methanococci</taxon>
        <taxon>Methanococcales</taxon>
        <taxon>Methanocaldococcaceae</taxon>
        <taxon>Methanocaldococcus</taxon>
    </lineage>
</organism>
<reference key="1">
    <citation type="journal article" date="1996" name="Science">
        <title>Complete genome sequence of the methanogenic archaeon, Methanococcus jannaschii.</title>
        <authorList>
            <person name="Bult C.J."/>
            <person name="White O."/>
            <person name="Olsen G.J."/>
            <person name="Zhou L."/>
            <person name="Fleischmann R.D."/>
            <person name="Sutton G.G."/>
            <person name="Blake J.A."/>
            <person name="FitzGerald L.M."/>
            <person name="Clayton R.A."/>
            <person name="Gocayne J.D."/>
            <person name="Kerlavage A.R."/>
            <person name="Dougherty B.A."/>
            <person name="Tomb J.-F."/>
            <person name="Adams M.D."/>
            <person name="Reich C.I."/>
            <person name="Overbeek R."/>
            <person name="Kirkness E.F."/>
            <person name="Weinstock K.G."/>
            <person name="Merrick J.M."/>
            <person name="Glodek A."/>
            <person name="Scott J.L."/>
            <person name="Geoghagen N.S.M."/>
            <person name="Weidman J.F."/>
            <person name="Fuhrmann J.L."/>
            <person name="Nguyen D."/>
            <person name="Utterback T.R."/>
            <person name="Kelley J.M."/>
            <person name="Peterson J.D."/>
            <person name="Sadow P.W."/>
            <person name="Hanna M.C."/>
            <person name="Cotton M.D."/>
            <person name="Roberts K.M."/>
            <person name="Hurst M.A."/>
            <person name="Kaine B.P."/>
            <person name="Borodovsky M."/>
            <person name="Klenk H.-P."/>
            <person name="Fraser C.M."/>
            <person name="Smith H.O."/>
            <person name="Woese C.R."/>
            <person name="Venter J.C."/>
        </authorList>
    </citation>
    <scope>NUCLEOTIDE SEQUENCE [LARGE SCALE GENOMIC DNA]</scope>
    <source>
        <strain>ATCC 43067 / DSM 2661 / JAL-1 / JCM 10045 / NBRC 100440</strain>
    </source>
</reference>
<dbReference type="EC" id="3.6.4.13"/>
<dbReference type="EMBL" id="L77117">
    <property type="protein sequence ID" value="AAB99518.1"/>
    <property type="molecule type" value="Genomic_DNA"/>
</dbReference>
<dbReference type="RefSeq" id="WP_010871028.1">
    <property type="nucleotide sequence ID" value="NC_000909.1"/>
</dbReference>
<dbReference type="SMR" id="Q58900"/>
<dbReference type="FunCoup" id="Q58900">
    <property type="interactions" value="75"/>
</dbReference>
<dbReference type="STRING" id="243232.MJ_1505"/>
<dbReference type="PaxDb" id="243232-MJ_1505"/>
<dbReference type="EnsemblBacteria" id="AAB99518">
    <property type="protein sequence ID" value="AAB99518"/>
    <property type="gene ID" value="MJ_1505"/>
</dbReference>
<dbReference type="GeneID" id="1452412"/>
<dbReference type="KEGG" id="mja:MJ_1505"/>
<dbReference type="eggNOG" id="arCOG00872">
    <property type="taxonomic scope" value="Archaea"/>
</dbReference>
<dbReference type="HOGENOM" id="CLU_002513_3_1_2"/>
<dbReference type="InParanoid" id="Q58900"/>
<dbReference type="OrthoDB" id="9764at2157"/>
<dbReference type="PhylomeDB" id="Q58900"/>
<dbReference type="Proteomes" id="UP000000805">
    <property type="component" value="Chromosome"/>
</dbReference>
<dbReference type="GO" id="GO:0005524">
    <property type="term" value="F:ATP binding"/>
    <property type="evidence" value="ECO:0007669"/>
    <property type="project" value="UniProtKB-KW"/>
</dbReference>
<dbReference type="GO" id="GO:0016887">
    <property type="term" value="F:ATP hydrolysis activity"/>
    <property type="evidence" value="ECO:0007669"/>
    <property type="project" value="RHEA"/>
</dbReference>
<dbReference type="GO" id="GO:0140097">
    <property type="term" value="F:catalytic activity, acting on DNA"/>
    <property type="evidence" value="ECO:0007669"/>
    <property type="project" value="UniProtKB-ARBA"/>
</dbReference>
<dbReference type="GO" id="GO:0003677">
    <property type="term" value="F:DNA binding"/>
    <property type="evidence" value="ECO:0007669"/>
    <property type="project" value="InterPro"/>
</dbReference>
<dbReference type="GO" id="GO:0004518">
    <property type="term" value="F:nuclease activity"/>
    <property type="evidence" value="ECO:0007669"/>
    <property type="project" value="InterPro"/>
</dbReference>
<dbReference type="GO" id="GO:0003723">
    <property type="term" value="F:RNA binding"/>
    <property type="evidence" value="ECO:0007669"/>
    <property type="project" value="UniProtKB-KW"/>
</dbReference>
<dbReference type="GO" id="GO:0003724">
    <property type="term" value="F:RNA helicase activity"/>
    <property type="evidence" value="ECO:0007669"/>
    <property type="project" value="UniProtKB-EC"/>
</dbReference>
<dbReference type="GO" id="GO:0006281">
    <property type="term" value="P:DNA repair"/>
    <property type="evidence" value="ECO:0007669"/>
    <property type="project" value="InterPro"/>
</dbReference>
<dbReference type="CDD" id="cd18035">
    <property type="entry name" value="DEXHc_Hef"/>
    <property type="match status" value="1"/>
</dbReference>
<dbReference type="CDD" id="cd12089">
    <property type="entry name" value="Hef_ID"/>
    <property type="match status" value="1"/>
</dbReference>
<dbReference type="CDD" id="cd20075">
    <property type="entry name" value="XPF_nuclease_XPF_arch"/>
    <property type="match status" value="1"/>
</dbReference>
<dbReference type="Gene3D" id="3.40.50.10130">
    <property type="match status" value="1"/>
</dbReference>
<dbReference type="Gene3D" id="1.10.150.20">
    <property type="entry name" value="5' to 3' exonuclease, C-terminal subdomain"/>
    <property type="match status" value="1"/>
</dbReference>
<dbReference type="Gene3D" id="1.20.1320.20">
    <property type="entry name" value="hef helicase domain"/>
    <property type="match status" value="1"/>
</dbReference>
<dbReference type="Gene3D" id="3.40.50.300">
    <property type="entry name" value="P-loop containing nucleotide triphosphate hydrolases"/>
    <property type="match status" value="2"/>
</dbReference>
<dbReference type="InterPro" id="IPR006166">
    <property type="entry name" value="ERCC4_domain"/>
</dbReference>
<dbReference type="InterPro" id="IPR041755">
    <property type="entry name" value="Hef_ID"/>
</dbReference>
<dbReference type="InterPro" id="IPR006935">
    <property type="entry name" value="Helicase/UvrB_N"/>
</dbReference>
<dbReference type="InterPro" id="IPR014001">
    <property type="entry name" value="Helicase_ATP-bd"/>
</dbReference>
<dbReference type="InterPro" id="IPR001650">
    <property type="entry name" value="Helicase_C-like"/>
</dbReference>
<dbReference type="InterPro" id="IPR003583">
    <property type="entry name" value="Hlx-hairpin-Hlx_DNA-bd_motif"/>
</dbReference>
<dbReference type="InterPro" id="IPR027417">
    <property type="entry name" value="P-loop_NTPase"/>
</dbReference>
<dbReference type="InterPro" id="IPR011335">
    <property type="entry name" value="Restrct_endonuc-II-like"/>
</dbReference>
<dbReference type="InterPro" id="IPR010994">
    <property type="entry name" value="RuvA_2-like"/>
</dbReference>
<dbReference type="NCBIfam" id="NF010337">
    <property type="entry name" value="PRK13766.1"/>
    <property type="match status" value="1"/>
</dbReference>
<dbReference type="PANTHER" id="PTHR14025">
    <property type="entry name" value="FANCONI ANEMIA GROUP M FANCM FAMILY MEMBER"/>
    <property type="match status" value="1"/>
</dbReference>
<dbReference type="PANTHER" id="PTHR14025:SF20">
    <property type="entry name" value="FANCONI ANEMIA GROUP M PROTEIN"/>
    <property type="match status" value="1"/>
</dbReference>
<dbReference type="Pfam" id="PF02732">
    <property type="entry name" value="ERCC4"/>
    <property type="match status" value="1"/>
</dbReference>
<dbReference type="Pfam" id="PF00271">
    <property type="entry name" value="Helicase_C"/>
    <property type="match status" value="1"/>
</dbReference>
<dbReference type="Pfam" id="PF14520">
    <property type="entry name" value="HHH_5"/>
    <property type="match status" value="1"/>
</dbReference>
<dbReference type="Pfam" id="PF04851">
    <property type="entry name" value="ResIII"/>
    <property type="match status" value="1"/>
</dbReference>
<dbReference type="Pfam" id="PF21210">
    <property type="entry name" value="RNA_helicase_helical"/>
    <property type="match status" value="1"/>
</dbReference>
<dbReference type="SMART" id="SM00487">
    <property type="entry name" value="DEXDc"/>
    <property type="match status" value="1"/>
</dbReference>
<dbReference type="SMART" id="SM00891">
    <property type="entry name" value="ERCC4"/>
    <property type="match status" value="1"/>
</dbReference>
<dbReference type="SMART" id="SM00490">
    <property type="entry name" value="HELICc"/>
    <property type="match status" value="1"/>
</dbReference>
<dbReference type="SMART" id="SM00278">
    <property type="entry name" value="HhH1"/>
    <property type="match status" value="2"/>
</dbReference>
<dbReference type="SUPFAM" id="SSF52540">
    <property type="entry name" value="P-loop containing nucleoside triphosphate hydrolases"/>
    <property type="match status" value="1"/>
</dbReference>
<dbReference type="SUPFAM" id="SSF52980">
    <property type="entry name" value="Restriction endonuclease-like"/>
    <property type="match status" value="1"/>
</dbReference>
<dbReference type="SUPFAM" id="SSF47781">
    <property type="entry name" value="RuvA domain 2-like"/>
    <property type="match status" value="1"/>
</dbReference>
<dbReference type="PROSITE" id="PS51192">
    <property type="entry name" value="HELICASE_ATP_BIND_1"/>
    <property type="match status" value="1"/>
</dbReference>
<dbReference type="PROSITE" id="PS51194">
    <property type="entry name" value="HELICASE_CTER"/>
    <property type="match status" value="1"/>
</dbReference>
<feature type="chain" id="PRO_0000055117" description="Putative ATP-dependent RNA helicase MJ1505">
    <location>
        <begin position="1"/>
        <end position="778"/>
    </location>
</feature>
<feature type="domain" description="Helicase ATP-binding" evidence="1">
    <location>
        <begin position="22"/>
        <end position="186"/>
    </location>
</feature>
<feature type="domain" description="Helicase C-terminal" evidence="2">
    <location>
        <begin position="338"/>
        <end position="516"/>
    </location>
</feature>
<feature type="short sequence motif" description="DEAH box">
    <location>
        <begin position="137"/>
        <end position="140"/>
    </location>
</feature>
<feature type="binding site" evidence="1">
    <location>
        <begin position="35"/>
        <end position="42"/>
    </location>
    <ligand>
        <name>ATP</name>
        <dbReference type="ChEBI" id="CHEBI:30616"/>
    </ligand>
</feature>
<comment type="catalytic activity">
    <reaction>
        <text>ATP + H2O = ADP + phosphate + H(+)</text>
        <dbReference type="Rhea" id="RHEA:13065"/>
        <dbReference type="ChEBI" id="CHEBI:15377"/>
        <dbReference type="ChEBI" id="CHEBI:15378"/>
        <dbReference type="ChEBI" id="CHEBI:30616"/>
        <dbReference type="ChEBI" id="CHEBI:43474"/>
        <dbReference type="ChEBI" id="CHEBI:456216"/>
        <dbReference type="EC" id="3.6.4.13"/>
    </reaction>
</comment>
<comment type="similarity">
    <text evidence="3">Belongs to the DEAD box helicase family. DEAH subfamily.</text>
</comment>
<protein>
    <recommendedName>
        <fullName>Putative ATP-dependent RNA helicase MJ1505</fullName>
        <ecNumber>3.6.4.13</ecNumber>
    </recommendedName>
</protein>
<gene>
    <name type="ordered locus">MJ1505</name>
</gene>
<proteinExistence type="inferred from homology"/>
<name>Y1505_METJA</name>
<sequence>MFIEHPLIKPKTLEARLYQQIIAANALKKKTLCVLSTGLGKTAIAILVIAGILTKKDGKVLILAPSRPLVEQHYNRLKQVLNIDEDKIIALTGKIQPKKRAELYKKGKIFIATPQVIENDIIAGRINVDEFILLIADEAHHTTGDHAYAFVAKKFKDKCHILGLTASPGSDIDKVMEICENLGIEHVEVRTEDDEDVKPYIAKVKLIPIRIDLPNEFKRALKLINEALKERLKILKDAGVINSIADVTKTELIELNNKLFSYDEEVKYELIKVCSEALKLMHAKELLESQGKSVFLNYINKLSMQRTKSAKSIVNDEKVREAVNLLMKSDVEHPKLGKVVDMVKNILEKNKDERIIIFAQYRDTVEKIVNLLTQNGIKAIRFIGQANKEGKGMSQKEQIEAIERFKKEGSVLVSTSVSEEGIDIPSVNYIIFYEPVPSEIRFIQRRGRAMRGEGGKVYVLIAKGTADEAYYRSALYKEREMKRLLKNMCYLLNKRLQKKFEEKSKEEIKEETEEIKEKEIESKTAVKEETKEEEEKTKKPVTILDFIKQIEVKERSKSEEDKIKQEIKIPKKPIKIIVDVREKNMAKLLHNYANIELKTLEVGDYVLSDRVVVERKTAEDFVNSIIDKRLFSQLKNLKKVEKPLLIVEGENFSRLHENALKGAILSIILDFGIPIIFTKNAEETADLLIKIAEKEQIKEKRTVMVRYGKTAMSLKEQQKFIVESLPDVGGALAERLLKHFKTVENVFTAKEEELMKVEGVGKERAKKIREVLTAEYEG</sequence>
<evidence type="ECO:0000255" key="1">
    <source>
        <dbReference type="PROSITE-ProRule" id="PRU00541"/>
    </source>
</evidence>
<evidence type="ECO:0000255" key="2">
    <source>
        <dbReference type="PROSITE-ProRule" id="PRU00542"/>
    </source>
</evidence>
<evidence type="ECO:0000305" key="3"/>
<accession>Q58900</accession>
<keyword id="KW-0067">ATP-binding</keyword>
<keyword id="KW-0347">Helicase</keyword>
<keyword id="KW-0378">Hydrolase</keyword>
<keyword id="KW-0547">Nucleotide-binding</keyword>
<keyword id="KW-1185">Reference proteome</keyword>
<keyword id="KW-0694">RNA-binding</keyword>